<protein>
    <recommendedName>
        <fullName>Multifunctional tryptophan biosynthesis protein</fullName>
    </recommendedName>
    <domain>
        <recommendedName>
            <fullName>Anthranilate synthase component 2</fullName>
            <shortName>AS</shortName>
            <ecNumber>4.1.3.27</ecNumber>
        </recommendedName>
        <alternativeName>
            <fullName>Anthranilate synthase, glutamine amidotransferase component</fullName>
        </alternativeName>
    </domain>
    <domain>
        <recommendedName>
            <fullName>Indole-3-glycerol phosphate synthase</fullName>
            <shortName>IGPS</shortName>
            <ecNumber>4.1.1.48</ecNumber>
        </recommendedName>
    </domain>
    <domain>
        <recommendedName>
            <fullName>N-(5'-phosphoribosyl)anthranilate isomerase</fullName>
            <shortName>PRAI</shortName>
            <ecNumber>5.3.1.24</ecNumber>
        </recommendedName>
    </domain>
</protein>
<feature type="chain" id="PRO_0000056857" description="Multifunctional tryptophan biosynthesis protein">
    <location>
        <begin position="1"/>
        <end position="752"/>
    </location>
</feature>
<feature type="domain" description="Glutamine amidotransferase type-1">
    <location>
        <begin position="3"/>
        <end position="202"/>
    </location>
</feature>
<feature type="region of interest" description="Indole-3-glycerol phosphate synthase">
    <location>
        <begin position="231"/>
        <end position="495"/>
    </location>
</feature>
<feature type="region of interest" description="N-(5'-phosphoribosyl)anthranilate isomerase">
    <location>
        <begin position="509"/>
        <end position="752"/>
    </location>
</feature>
<feature type="active site" description="Nucleophile; for GATase activity" evidence="2">
    <location>
        <position position="86"/>
    </location>
</feature>
<feature type="active site" description="For GATase activity" evidence="1">
    <location>
        <position position="176"/>
    </location>
</feature>
<feature type="active site" description="For GATase activity" evidence="1">
    <location>
        <position position="178"/>
    </location>
</feature>
<feature type="binding site" evidence="2">
    <location>
        <begin position="58"/>
        <end position="60"/>
    </location>
    <ligand>
        <name>L-glutamine</name>
        <dbReference type="ChEBI" id="CHEBI:58359"/>
    </ligand>
</feature>
<feature type="binding site" evidence="2">
    <location>
        <begin position="136"/>
        <end position="137"/>
    </location>
    <ligand>
        <name>L-glutamine</name>
        <dbReference type="ChEBI" id="CHEBI:58359"/>
    </ligand>
</feature>
<keyword id="KW-0028">Amino-acid biosynthesis</keyword>
<keyword id="KW-0057">Aromatic amino acid biosynthesis</keyword>
<keyword id="KW-0210">Decarboxylase</keyword>
<keyword id="KW-0315">Glutamine amidotransferase</keyword>
<keyword id="KW-0413">Isomerase</keyword>
<keyword id="KW-0456">Lyase</keyword>
<keyword id="KW-0511">Multifunctional enzyme</keyword>
<keyword id="KW-1185">Reference proteome</keyword>
<keyword id="KW-0822">Tryptophan biosynthesis</keyword>
<organism>
    <name type="scientific">Cryptococcus neoformans var. neoformans serotype D (strain JEC21 / ATCC MYA-565)</name>
    <name type="common">Filobasidiella neoformans</name>
    <dbReference type="NCBI Taxonomy" id="214684"/>
    <lineage>
        <taxon>Eukaryota</taxon>
        <taxon>Fungi</taxon>
        <taxon>Dikarya</taxon>
        <taxon>Basidiomycota</taxon>
        <taxon>Agaricomycotina</taxon>
        <taxon>Tremellomycetes</taxon>
        <taxon>Tremellales</taxon>
        <taxon>Cryptococcaceae</taxon>
        <taxon>Cryptococcus</taxon>
        <taxon>Cryptococcus neoformans species complex</taxon>
    </lineage>
</organism>
<sequence length="752" mass="80473">MGFTLLIDNYDSFTWNIYADLASVGGNPYVVRNDKITLKEIEGMFSDGELERIVISPGPGHPRTDSGVSRDVIAWGMGKLPILGVCMGLECIVDLLGGEIAYAGEIKHGKTSLVQHDSIGVFHNLPQFLSSTRYHSLSAQIQSLPSVLQVTSTTKESGVIMGVRHRTYTVEAVQYHPESCMSEGGRGLMANFIQMKGGKWGGENAWCGVPAEGEEEQPKAKTNGAPSLPTILNRIHAQRLLDVEQAEKVPATSPANVSTSLSLYASPPLINFRDRMVSTPHTAVMAEIKRASPSKGDIAPTASAPEQALKYALAGASVISVLTEPTWFKGSLLDMLAVRNAVDSLPNRPAILRKDFVLSKYMIDEARLYGADTVLLIVAMLEPQQLKELYDYSVSLGMEPLVEVNNPTELSLALEIGSKVIGVNNRNLHDFNVDMSTTSRVNAALNGRDVVLCALSGISSHEDVEKYVKEGVKGVLVGEALMRASDTKAFLRSLIGLPPLEVVPKSRPLVKICGIRSTDDAKLAISAGADLLGVILVPGTKRCISTSTAREISALVQSARSQSSSKPLEPSLSSPWFTTQSDLLSSRRKPLLVGVFQNQSLSDILSAVEEIGLDLVQLHGDEPQAWAKFIPVPVVKVFRVSPEGIVRGGEFRRPGLNQAILLDAGGVSGGGGEGKAFPWEHAKRLIQSGEVGSEGHMPLPVILAGGLTPENVGQAIEQAGEGVWCVDVSSGVEGEGGKVKEKVEAFVKAVRG</sequence>
<proteinExistence type="inferred from homology"/>
<dbReference type="EC" id="4.1.3.27"/>
<dbReference type="EC" id="4.1.1.48"/>
<dbReference type="EC" id="5.3.1.24"/>
<dbReference type="EMBL" id="AE017349">
    <property type="protein sequence ID" value="AAW45488.1"/>
    <property type="molecule type" value="Genomic_DNA"/>
</dbReference>
<dbReference type="RefSeq" id="XP_572795.1">
    <property type="nucleotide sequence ID" value="XM_572795.1"/>
</dbReference>
<dbReference type="SMR" id="P0CN86"/>
<dbReference type="FunCoup" id="P0CN86">
    <property type="interactions" value="92"/>
</dbReference>
<dbReference type="STRING" id="214684.P0CN86"/>
<dbReference type="MEROPS" id="C26.959"/>
<dbReference type="PaxDb" id="214684-P0CN86"/>
<dbReference type="EnsemblFungi" id="AAW45488">
    <property type="protein sequence ID" value="AAW45488"/>
    <property type="gene ID" value="CNI00560"/>
</dbReference>
<dbReference type="GeneID" id="3259660"/>
<dbReference type="KEGG" id="cne:CNI00560"/>
<dbReference type="VEuPathDB" id="FungiDB:CNI00560"/>
<dbReference type="eggNOG" id="KOG0026">
    <property type="taxonomic scope" value="Eukaryota"/>
</dbReference>
<dbReference type="eggNOG" id="KOG4201">
    <property type="taxonomic scope" value="Eukaryota"/>
</dbReference>
<dbReference type="eggNOG" id="KOG4202">
    <property type="taxonomic scope" value="Eukaryota"/>
</dbReference>
<dbReference type="HOGENOM" id="CLU_007713_2_0_1"/>
<dbReference type="InParanoid" id="P0CN86"/>
<dbReference type="OMA" id="EPIEWAN"/>
<dbReference type="OrthoDB" id="524799at2759"/>
<dbReference type="UniPathway" id="UPA00035">
    <property type="reaction ID" value="UER00040"/>
</dbReference>
<dbReference type="UniPathway" id="UPA00035">
    <property type="reaction ID" value="UER00042"/>
</dbReference>
<dbReference type="UniPathway" id="UPA00035">
    <property type="reaction ID" value="UER00043"/>
</dbReference>
<dbReference type="Proteomes" id="UP000002149">
    <property type="component" value="Chromosome 9"/>
</dbReference>
<dbReference type="GO" id="GO:0004049">
    <property type="term" value="F:anthranilate synthase activity"/>
    <property type="evidence" value="ECO:0007669"/>
    <property type="project" value="UniProtKB-EC"/>
</dbReference>
<dbReference type="GO" id="GO:0004425">
    <property type="term" value="F:indole-3-glycerol-phosphate synthase activity"/>
    <property type="evidence" value="ECO:0007669"/>
    <property type="project" value="UniProtKB-EC"/>
</dbReference>
<dbReference type="GO" id="GO:0004640">
    <property type="term" value="F:phosphoribosylanthranilate isomerase activity"/>
    <property type="evidence" value="ECO:0007669"/>
    <property type="project" value="UniProtKB-EC"/>
</dbReference>
<dbReference type="GO" id="GO:0000162">
    <property type="term" value="P:L-tryptophan biosynthetic process"/>
    <property type="evidence" value="ECO:0000318"/>
    <property type="project" value="GO_Central"/>
</dbReference>
<dbReference type="CDD" id="cd01743">
    <property type="entry name" value="GATase1_Anthranilate_Synthase"/>
    <property type="match status" value="1"/>
</dbReference>
<dbReference type="CDD" id="cd00331">
    <property type="entry name" value="IGPS"/>
    <property type="match status" value="1"/>
</dbReference>
<dbReference type="CDD" id="cd00405">
    <property type="entry name" value="PRAI"/>
    <property type="match status" value="1"/>
</dbReference>
<dbReference type="FunFam" id="3.20.20.70:FF:000136">
    <property type="entry name" value="Multifunctional tryptophan biosynthesis protein"/>
    <property type="match status" value="1"/>
</dbReference>
<dbReference type="FunFam" id="3.40.50.880:FF:000031">
    <property type="entry name" value="Multifunctional tryptophan biosynthesis protein"/>
    <property type="match status" value="1"/>
</dbReference>
<dbReference type="Gene3D" id="3.40.50.880">
    <property type="match status" value="1"/>
</dbReference>
<dbReference type="Gene3D" id="3.20.20.70">
    <property type="entry name" value="Aldolase class I"/>
    <property type="match status" value="2"/>
</dbReference>
<dbReference type="HAMAP" id="MF_00135">
    <property type="entry name" value="PRAI"/>
    <property type="match status" value="1"/>
</dbReference>
<dbReference type="InterPro" id="IPR013785">
    <property type="entry name" value="Aldolase_TIM"/>
</dbReference>
<dbReference type="InterPro" id="IPR016302">
    <property type="entry name" value="Anthranilate_synth_II"/>
</dbReference>
<dbReference type="InterPro" id="IPR029062">
    <property type="entry name" value="Class_I_gatase-like"/>
</dbReference>
<dbReference type="InterPro" id="IPR017926">
    <property type="entry name" value="GATASE"/>
</dbReference>
<dbReference type="InterPro" id="IPR045186">
    <property type="entry name" value="Indole-3-glycerol_P_synth"/>
</dbReference>
<dbReference type="InterPro" id="IPR013798">
    <property type="entry name" value="Indole-3-glycerol_P_synth_dom"/>
</dbReference>
<dbReference type="InterPro" id="IPR001468">
    <property type="entry name" value="Indole-3-GlycerolPSynthase_CS"/>
</dbReference>
<dbReference type="InterPro" id="IPR001240">
    <property type="entry name" value="PRAI_dom"/>
</dbReference>
<dbReference type="InterPro" id="IPR011060">
    <property type="entry name" value="RibuloseP-bd_barrel"/>
</dbReference>
<dbReference type="InterPro" id="IPR006221">
    <property type="entry name" value="TrpG/PapA_dom"/>
</dbReference>
<dbReference type="NCBIfam" id="TIGR00566">
    <property type="entry name" value="trpG_papA"/>
    <property type="match status" value="1"/>
</dbReference>
<dbReference type="PANTHER" id="PTHR22854:SF2">
    <property type="entry name" value="INDOLE-3-GLYCEROL-PHOSPHATE SYNTHASE"/>
    <property type="match status" value="1"/>
</dbReference>
<dbReference type="PANTHER" id="PTHR22854">
    <property type="entry name" value="TRYPTOPHAN BIOSYNTHESIS PROTEIN"/>
    <property type="match status" value="1"/>
</dbReference>
<dbReference type="Pfam" id="PF00117">
    <property type="entry name" value="GATase"/>
    <property type="match status" value="1"/>
</dbReference>
<dbReference type="Pfam" id="PF00218">
    <property type="entry name" value="IGPS"/>
    <property type="match status" value="1"/>
</dbReference>
<dbReference type="Pfam" id="PF00697">
    <property type="entry name" value="PRAI"/>
    <property type="match status" value="1"/>
</dbReference>
<dbReference type="PIRSF" id="PIRSF001382">
    <property type="entry name" value="TrpG-trpC-trpF"/>
    <property type="match status" value="1"/>
</dbReference>
<dbReference type="PRINTS" id="PR00097">
    <property type="entry name" value="ANTSNTHASEII"/>
</dbReference>
<dbReference type="PRINTS" id="PR00096">
    <property type="entry name" value="GATASE"/>
</dbReference>
<dbReference type="SUPFAM" id="SSF52317">
    <property type="entry name" value="Class I glutamine amidotransferase-like"/>
    <property type="match status" value="1"/>
</dbReference>
<dbReference type="SUPFAM" id="SSF51366">
    <property type="entry name" value="Ribulose-phoshate binding barrel"/>
    <property type="match status" value="2"/>
</dbReference>
<dbReference type="PROSITE" id="PS51273">
    <property type="entry name" value="GATASE_TYPE_1"/>
    <property type="match status" value="1"/>
</dbReference>
<dbReference type="PROSITE" id="PS00614">
    <property type="entry name" value="IGPS"/>
    <property type="match status" value="1"/>
</dbReference>
<accession>P0CN86</accession>
<accession>Q55NN6</accession>
<accession>Q5KC22</accession>
<gene>
    <name type="primary">TRP1</name>
    <name type="ordered locus">CNI00560</name>
</gene>
<reference key="1">
    <citation type="journal article" date="2005" name="Science">
        <title>The genome of the basidiomycetous yeast and human pathogen Cryptococcus neoformans.</title>
        <authorList>
            <person name="Loftus B.J."/>
            <person name="Fung E."/>
            <person name="Roncaglia P."/>
            <person name="Rowley D."/>
            <person name="Amedeo P."/>
            <person name="Bruno D."/>
            <person name="Vamathevan J."/>
            <person name="Miranda M."/>
            <person name="Anderson I.J."/>
            <person name="Fraser J.A."/>
            <person name="Allen J.E."/>
            <person name="Bosdet I.E."/>
            <person name="Brent M.R."/>
            <person name="Chiu R."/>
            <person name="Doering T.L."/>
            <person name="Donlin M.J."/>
            <person name="D'Souza C.A."/>
            <person name="Fox D.S."/>
            <person name="Grinberg V."/>
            <person name="Fu J."/>
            <person name="Fukushima M."/>
            <person name="Haas B.J."/>
            <person name="Huang J.C."/>
            <person name="Janbon G."/>
            <person name="Jones S.J.M."/>
            <person name="Koo H.L."/>
            <person name="Krzywinski M.I."/>
            <person name="Kwon-Chung K.J."/>
            <person name="Lengeler K.B."/>
            <person name="Maiti R."/>
            <person name="Marra M.A."/>
            <person name="Marra R.E."/>
            <person name="Mathewson C.A."/>
            <person name="Mitchell T.G."/>
            <person name="Pertea M."/>
            <person name="Riggs F.R."/>
            <person name="Salzberg S.L."/>
            <person name="Schein J.E."/>
            <person name="Shvartsbeyn A."/>
            <person name="Shin H."/>
            <person name="Shumway M."/>
            <person name="Specht C.A."/>
            <person name="Suh B.B."/>
            <person name="Tenney A."/>
            <person name="Utterback T.R."/>
            <person name="Wickes B.L."/>
            <person name="Wortman J.R."/>
            <person name="Wye N.H."/>
            <person name="Kronstad J.W."/>
            <person name="Lodge J.K."/>
            <person name="Heitman J."/>
            <person name="Davis R.W."/>
            <person name="Fraser C.M."/>
            <person name="Hyman R.W."/>
        </authorList>
    </citation>
    <scope>NUCLEOTIDE SEQUENCE [LARGE SCALE GENOMIC DNA]</scope>
    <source>
        <strain>JEC21 / ATCC MYA-565</strain>
    </source>
</reference>
<evidence type="ECO:0000250" key="1"/>
<evidence type="ECO:0000250" key="2">
    <source>
        <dbReference type="UniProtKB" id="P00900"/>
    </source>
</evidence>
<name>TRPG_CRYNJ</name>
<comment type="function">
    <text>Trifunctional enzyme bearing the Gln amidotransferase (GATase) domain of anthranilate synthase, indole-glycerolphosphate synthase, and phosphoribosylanthranilate isomerase activities.</text>
</comment>
<comment type="catalytic activity">
    <reaction>
        <text>N-(5-phospho-beta-D-ribosyl)anthranilate = 1-(2-carboxyphenylamino)-1-deoxy-D-ribulose 5-phosphate</text>
        <dbReference type="Rhea" id="RHEA:21540"/>
        <dbReference type="ChEBI" id="CHEBI:18277"/>
        <dbReference type="ChEBI" id="CHEBI:58613"/>
        <dbReference type="EC" id="5.3.1.24"/>
    </reaction>
</comment>
<comment type="catalytic activity">
    <reaction>
        <text>1-(2-carboxyphenylamino)-1-deoxy-D-ribulose 5-phosphate + H(+) = (1S,2R)-1-C-(indol-3-yl)glycerol 3-phosphate + CO2 + H2O</text>
        <dbReference type="Rhea" id="RHEA:23476"/>
        <dbReference type="ChEBI" id="CHEBI:15377"/>
        <dbReference type="ChEBI" id="CHEBI:15378"/>
        <dbReference type="ChEBI" id="CHEBI:16526"/>
        <dbReference type="ChEBI" id="CHEBI:58613"/>
        <dbReference type="ChEBI" id="CHEBI:58866"/>
        <dbReference type="EC" id="4.1.1.48"/>
    </reaction>
</comment>
<comment type="catalytic activity">
    <reaction>
        <text>chorismate + L-glutamine = anthranilate + pyruvate + L-glutamate + H(+)</text>
        <dbReference type="Rhea" id="RHEA:21732"/>
        <dbReference type="ChEBI" id="CHEBI:15361"/>
        <dbReference type="ChEBI" id="CHEBI:15378"/>
        <dbReference type="ChEBI" id="CHEBI:16567"/>
        <dbReference type="ChEBI" id="CHEBI:29748"/>
        <dbReference type="ChEBI" id="CHEBI:29985"/>
        <dbReference type="ChEBI" id="CHEBI:58359"/>
        <dbReference type="EC" id="4.1.3.27"/>
    </reaction>
</comment>
<comment type="pathway">
    <text>Amino-acid biosynthesis; L-tryptophan biosynthesis; L-tryptophan from chorismate: step 1/5.</text>
</comment>
<comment type="pathway">
    <text>Amino-acid biosynthesis; L-tryptophan biosynthesis; L-tryptophan from chorismate: step 3/5.</text>
</comment>
<comment type="pathway">
    <text>Amino-acid biosynthesis; L-tryptophan biosynthesis; L-tryptophan from chorismate: step 4/5.</text>
</comment>